<gene>
    <name type="primary">CSLC10</name>
    <name type="ORF">OsI_023862</name>
</gene>
<organism>
    <name type="scientific">Oryza sativa subsp. indica</name>
    <name type="common">Rice</name>
    <dbReference type="NCBI Taxonomy" id="39946"/>
    <lineage>
        <taxon>Eukaryota</taxon>
        <taxon>Viridiplantae</taxon>
        <taxon>Streptophyta</taxon>
        <taxon>Embryophyta</taxon>
        <taxon>Tracheophyta</taxon>
        <taxon>Spermatophyta</taxon>
        <taxon>Magnoliopsida</taxon>
        <taxon>Liliopsida</taxon>
        <taxon>Poales</taxon>
        <taxon>Poaceae</taxon>
        <taxon>BOP clade</taxon>
        <taxon>Oryzoideae</taxon>
        <taxon>Oryzeae</taxon>
        <taxon>Oryzinae</taxon>
        <taxon>Oryza</taxon>
        <taxon>Oryza sativa</taxon>
    </lineage>
</organism>
<protein>
    <recommendedName>
        <fullName>Putative xyloglucan glycosyltransferase 10</fullName>
        <ecNumber>2.4.1.-</ecNumber>
    </recommendedName>
    <alternativeName>
        <fullName>Cellulose synthase-like protein C10</fullName>
    </alternativeName>
    <alternativeName>
        <fullName>OsCslC10</fullName>
    </alternativeName>
</protein>
<reference key="1">
    <citation type="journal article" date="2005" name="PLoS Biol.">
        <title>The genomes of Oryza sativa: a history of duplications.</title>
        <authorList>
            <person name="Yu J."/>
            <person name="Wang J."/>
            <person name="Lin W."/>
            <person name="Li S."/>
            <person name="Li H."/>
            <person name="Zhou J."/>
            <person name="Ni P."/>
            <person name="Dong W."/>
            <person name="Hu S."/>
            <person name="Zeng C."/>
            <person name="Zhang J."/>
            <person name="Zhang Y."/>
            <person name="Li R."/>
            <person name="Xu Z."/>
            <person name="Li S."/>
            <person name="Li X."/>
            <person name="Zheng H."/>
            <person name="Cong L."/>
            <person name="Lin L."/>
            <person name="Yin J."/>
            <person name="Geng J."/>
            <person name="Li G."/>
            <person name="Shi J."/>
            <person name="Liu J."/>
            <person name="Lv H."/>
            <person name="Li J."/>
            <person name="Wang J."/>
            <person name="Deng Y."/>
            <person name="Ran L."/>
            <person name="Shi X."/>
            <person name="Wang X."/>
            <person name="Wu Q."/>
            <person name="Li C."/>
            <person name="Ren X."/>
            <person name="Wang J."/>
            <person name="Wang X."/>
            <person name="Li D."/>
            <person name="Liu D."/>
            <person name="Zhang X."/>
            <person name="Ji Z."/>
            <person name="Zhao W."/>
            <person name="Sun Y."/>
            <person name="Zhang Z."/>
            <person name="Bao J."/>
            <person name="Han Y."/>
            <person name="Dong L."/>
            <person name="Ji J."/>
            <person name="Chen P."/>
            <person name="Wu S."/>
            <person name="Liu J."/>
            <person name="Xiao Y."/>
            <person name="Bu D."/>
            <person name="Tan J."/>
            <person name="Yang L."/>
            <person name="Ye C."/>
            <person name="Zhang J."/>
            <person name="Xu J."/>
            <person name="Zhou Y."/>
            <person name="Yu Y."/>
            <person name="Zhang B."/>
            <person name="Zhuang S."/>
            <person name="Wei H."/>
            <person name="Liu B."/>
            <person name="Lei M."/>
            <person name="Yu H."/>
            <person name="Li Y."/>
            <person name="Xu H."/>
            <person name="Wei S."/>
            <person name="He X."/>
            <person name="Fang L."/>
            <person name="Zhang Z."/>
            <person name="Zhang Y."/>
            <person name="Huang X."/>
            <person name="Su Z."/>
            <person name="Tong W."/>
            <person name="Li J."/>
            <person name="Tong Z."/>
            <person name="Li S."/>
            <person name="Ye J."/>
            <person name="Wang L."/>
            <person name="Fang L."/>
            <person name="Lei T."/>
            <person name="Chen C.-S."/>
            <person name="Chen H.-C."/>
            <person name="Xu Z."/>
            <person name="Li H."/>
            <person name="Huang H."/>
            <person name="Zhang F."/>
            <person name="Xu H."/>
            <person name="Li N."/>
            <person name="Zhao C."/>
            <person name="Li S."/>
            <person name="Dong L."/>
            <person name="Huang Y."/>
            <person name="Li L."/>
            <person name="Xi Y."/>
            <person name="Qi Q."/>
            <person name="Li W."/>
            <person name="Zhang B."/>
            <person name="Hu W."/>
            <person name="Zhang Y."/>
            <person name="Tian X."/>
            <person name="Jiao Y."/>
            <person name="Liang X."/>
            <person name="Jin J."/>
            <person name="Gao L."/>
            <person name="Zheng W."/>
            <person name="Hao B."/>
            <person name="Liu S.-M."/>
            <person name="Wang W."/>
            <person name="Yuan L."/>
            <person name="Cao M."/>
            <person name="McDermott J."/>
            <person name="Samudrala R."/>
            <person name="Wang J."/>
            <person name="Wong G.K.-S."/>
            <person name="Yang H."/>
        </authorList>
    </citation>
    <scope>NUCLEOTIDE SEQUENCE [LARGE SCALE GENOMIC DNA]</scope>
    <source>
        <strain>cv. 93-11</strain>
    </source>
</reference>
<reference key="2">
    <citation type="journal article" date="2002" name="Plant Physiol.">
        <title>Cellulose synthase-like genes of rice.</title>
        <authorList>
            <person name="Hazen S.P."/>
            <person name="Scott-Craig J.S."/>
            <person name="Walton J.D."/>
        </authorList>
    </citation>
    <scope>GENE FAMILY</scope>
    <scope>NOMENCLATURE</scope>
</reference>
<accession>A2YHR9</accession>
<feature type="chain" id="PRO_0000319388" description="Putative xyloglucan glycosyltransferase 10">
    <location>
        <begin position="1"/>
        <end position="686"/>
    </location>
</feature>
<feature type="transmembrane region" description="Helical" evidence="2">
    <location>
        <begin position="114"/>
        <end position="134"/>
    </location>
</feature>
<feature type="transmembrane region" description="Helical" evidence="2">
    <location>
        <begin position="160"/>
        <end position="180"/>
    </location>
</feature>
<feature type="transmembrane region" description="Helical" evidence="2">
    <location>
        <begin position="498"/>
        <end position="518"/>
    </location>
</feature>
<feature type="transmembrane region" description="Helical" evidence="2">
    <location>
        <begin position="523"/>
        <end position="543"/>
    </location>
</feature>
<feature type="transmembrane region" description="Helical" evidence="2">
    <location>
        <begin position="640"/>
        <end position="656"/>
    </location>
</feature>
<feature type="transmembrane region" description="Helical" evidence="2">
    <location>
        <begin position="661"/>
        <end position="681"/>
    </location>
</feature>
<feature type="active site" evidence="2">
    <location>
        <position position="267"/>
    </location>
</feature>
<feature type="active site" evidence="2">
    <location>
        <position position="420"/>
    </location>
</feature>
<feature type="binding site" evidence="2">
    <location>
        <position position="326"/>
    </location>
    <ligand>
        <name>substrate</name>
    </ligand>
</feature>
<feature type="binding site" evidence="2">
    <location>
        <position position="328"/>
    </location>
    <ligand>
        <name>substrate</name>
    </ligand>
</feature>
<evidence type="ECO:0000250" key="1"/>
<evidence type="ECO:0000255" key="2"/>
<evidence type="ECO:0000305" key="3"/>
<keyword id="KW-0961">Cell wall biogenesis/degradation</keyword>
<keyword id="KW-0328">Glycosyltransferase</keyword>
<keyword id="KW-0333">Golgi apparatus</keyword>
<keyword id="KW-0472">Membrane</keyword>
<keyword id="KW-1185">Reference proteome</keyword>
<keyword id="KW-0808">Transferase</keyword>
<keyword id="KW-0812">Transmembrane</keyword>
<keyword id="KW-1133">Transmembrane helix</keyword>
<sequence>MAPWSGFWAASRPALAAAAAGGTPVVVKMDNPNWSISEIDADGGEFLAGGRRRGRGKNAKQITWVLLLKAHRAAGCLAWLASAAVALGAAARRRVAAGRTDDADAETPAPRSRLYAFIRASLLLSVFLLAVELAAHANGRGRVLAASVDSFHSSWVRFRAAYVAPPLQLLADACVVLFLVQSADRLVQCLGCLYIHLNRIKPKPISSPAAAAAALPDLEDPDAGDYYPMVLVQIPMCNEKEVYQQSIAAVCNLDWPRSNILVQVLDDSDDPITQSLIKEEVEKWRQNGARIVYRHRVLREGYKAGNLKSAMSCSYVKDYEYVAIFDADFQPYPDFLKRTVPHFKDNEELGLVQARWSFVNKDENLLTRLQNINLCFHFEVEQQVNGIFINFFGFNGTAGVWRIKALEDSGGWMERTTVEDMDIAVRAHLNGWKFVFLNDVECQCELPESYEAYRKQQHRWHSGPMQLFRLCLPDIIRCKIAFWKKANLIFLFFLLRKLILPFYSFTLFCIILPMTMFIPEAELPDWVVCYIPALMSFLNILPAPKSFPFIIPYLLFENTMSVTKFNAMISGLFQLGSAYEWVVTKKSGRSSEGDLIALAPKELKQQKILDLTAIKEQSMLKQSSPRNEAKKKYNRIYKKELALSLLLLTAAARSLLSKQGIHFYFLMFQGLSFLLVGLDLIGEDVK</sequence>
<comment type="function">
    <text evidence="1">Probable beta-1,4-glucan synthase rather involved in the synthesis of the xyloglucan backbone than cellulose. Seems to work simultaneously with xyloglucan 6-xylosyltransferase. Xyloglucan is a noncellulosic polysaccharides of plant cell wall and consists of a glucan backbone substituted by xylose, galactose and fucose (By similarity).</text>
</comment>
<comment type="subcellular location">
    <subcellularLocation>
        <location evidence="3">Golgi apparatus membrane</location>
        <topology evidence="3">Multi-pass membrane protein</topology>
    </subcellularLocation>
</comment>
<comment type="similarity">
    <text evidence="3">Belongs to the glycosyltransferase 2 family. Plant cellulose synthase-like C subfamily.</text>
</comment>
<name>CSLCA_ORYSI</name>
<dbReference type="EC" id="2.4.1.-"/>
<dbReference type="EMBL" id="CM000132">
    <property type="protein sequence ID" value="EAZ02630.1"/>
    <property type="molecule type" value="Genomic_DNA"/>
</dbReference>
<dbReference type="SMR" id="A2YHR9"/>
<dbReference type="STRING" id="39946.A2YHR9"/>
<dbReference type="EnsemblPlants" id="BGIOSGA024895-TA">
    <property type="protein sequence ID" value="BGIOSGA024895-PA"/>
    <property type="gene ID" value="BGIOSGA024895"/>
</dbReference>
<dbReference type="EnsemblPlants" id="OsIR64_07g0001620.01">
    <property type="protein sequence ID" value="OsIR64_07g0001620.01"/>
    <property type="gene ID" value="OsIR64_07g0001620"/>
</dbReference>
<dbReference type="EnsemblPlants" id="OsMH63_07G001660_01">
    <property type="protein sequence ID" value="OsMH63_07G001660_01"/>
    <property type="gene ID" value="OsMH63_07G001660"/>
</dbReference>
<dbReference type="EnsemblPlants" id="OsPr106_07g0001570.01">
    <property type="protein sequence ID" value="OsPr106_07g0001570.01"/>
    <property type="gene ID" value="OsPr106_07g0001570"/>
</dbReference>
<dbReference type="Gramene" id="BGIOSGA024895-TA">
    <property type="protein sequence ID" value="BGIOSGA024895-PA"/>
    <property type="gene ID" value="BGIOSGA024895"/>
</dbReference>
<dbReference type="Gramene" id="OsIR64_07g0001620.01">
    <property type="protein sequence ID" value="OsIR64_07g0001620.01"/>
    <property type="gene ID" value="OsIR64_07g0001620"/>
</dbReference>
<dbReference type="Gramene" id="OsMH63_07G001660_01">
    <property type="protein sequence ID" value="OsMH63_07G001660_01"/>
    <property type="gene ID" value="OsMH63_07G001660"/>
</dbReference>
<dbReference type="Gramene" id="OsPr106_07g0001570.01">
    <property type="protein sequence ID" value="OsPr106_07g0001570.01"/>
    <property type="gene ID" value="OsPr106_07g0001570"/>
</dbReference>
<dbReference type="HOGENOM" id="CLU_012856_1_0_1"/>
<dbReference type="OMA" id="FWGARAV"/>
<dbReference type="Proteomes" id="UP000007015">
    <property type="component" value="Chromosome 7"/>
</dbReference>
<dbReference type="GO" id="GO:0000139">
    <property type="term" value="C:Golgi membrane"/>
    <property type="evidence" value="ECO:0007669"/>
    <property type="project" value="UniProtKB-SubCell"/>
</dbReference>
<dbReference type="GO" id="GO:0016757">
    <property type="term" value="F:glycosyltransferase activity"/>
    <property type="evidence" value="ECO:0007669"/>
    <property type="project" value="UniProtKB-KW"/>
</dbReference>
<dbReference type="GO" id="GO:0071555">
    <property type="term" value="P:cell wall organization"/>
    <property type="evidence" value="ECO:0007669"/>
    <property type="project" value="UniProtKB-KW"/>
</dbReference>
<dbReference type="FunFam" id="3.90.550.10:FF:000007">
    <property type="entry name" value="probable xyloglucan glycosyltransferase 5"/>
    <property type="match status" value="1"/>
</dbReference>
<dbReference type="Gene3D" id="3.90.550.10">
    <property type="entry name" value="Spore Coat Polysaccharide Biosynthesis Protein SpsA, Chain A"/>
    <property type="match status" value="1"/>
</dbReference>
<dbReference type="InterPro" id="IPR001173">
    <property type="entry name" value="Glyco_trans_2-like"/>
</dbReference>
<dbReference type="InterPro" id="IPR029044">
    <property type="entry name" value="Nucleotide-diphossugar_trans"/>
</dbReference>
<dbReference type="PANTHER" id="PTHR32044">
    <property type="entry name" value="GLUCOMANNAN 4-BETA-MANNOSYLTRANSFERASE 9"/>
    <property type="match status" value="1"/>
</dbReference>
<dbReference type="PANTHER" id="PTHR32044:SF59">
    <property type="entry name" value="XYLOGLUCAN GLYCOSYLTRANSFERASE 10-RELATED"/>
    <property type="match status" value="1"/>
</dbReference>
<dbReference type="Pfam" id="PF13632">
    <property type="entry name" value="Glyco_trans_2_3"/>
    <property type="match status" value="1"/>
</dbReference>
<dbReference type="SUPFAM" id="SSF53448">
    <property type="entry name" value="Nucleotide-diphospho-sugar transferases"/>
    <property type="match status" value="1"/>
</dbReference>
<proteinExistence type="inferred from homology"/>